<gene>
    <name evidence="2" type="primary">accD</name>
</gene>
<geneLocation type="chloroplast"/>
<dbReference type="EC" id="2.1.3.15" evidence="2"/>
<dbReference type="EMBL" id="DQ923116">
    <property type="protein sequence ID" value="ABI49787.1"/>
    <property type="molecule type" value="Genomic_DNA"/>
</dbReference>
<dbReference type="RefSeq" id="YP_740574.1">
    <property type="nucleotide sequence ID" value="NC_008335.1"/>
</dbReference>
<dbReference type="SMR" id="Q09G37"/>
<dbReference type="GeneID" id="4271299"/>
<dbReference type="UniPathway" id="UPA00655">
    <property type="reaction ID" value="UER00711"/>
</dbReference>
<dbReference type="GO" id="GO:0009317">
    <property type="term" value="C:acetyl-CoA carboxylase complex"/>
    <property type="evidence" value="ECO:0007669"/>
    <property type="project" value="InterPro"/>
</dbReference>
<dbReference type="GO" id="GO:0009570">
    <property type="term" value="C:chloroplast stroma"/>
    <property type="evidence" value="ECO:0007669"/>
    <property type="project" value="UniProtKB-SubCell"/>
</dbReference>
<dbReference type="GO" id="GO:0003989">
    <property type="term" value="F:acetyl-CoA carboxylase activity"/>
    <property type="evidence" value="ECO:0007669"/>
    <property type="project" value="InterPro"/>
</dbReference>
<dbReference type="GO" id="GO:0005524">
    <property type="term" value="F:ATP binding"/>
    <property type="evidence" value="ECO:0007669"/>
    <property type="project" value="UniProtKB-KW"/>
</dbReference>
<dbReference type="GO" id="GO:0016743">
    <property type="term" value="F:carboxyl- or carbamoyltransferase activity"/>
    <property type="evidence" value="ECO:0007669"/>
    <property type="project" value="UniProtKB-UniRule"/>
</dbReference>
<dbReference type="GO" id="GO:0008270">
    <property type="term" value="F:zinc ion binding"/>
    <property type="evidence" value="ECO:0007669"/>
    <property type="project" value="UniProtKB-UniRule"/>
</dbReference>
<dbReference type="GO" id="GO:0006633">
    <property type="term" value="P:fatty acid biosynthetic process"/>
    <property type="evidence" value="ECO:0007669"/>
    <property type="project" value="UniProtKB-KW"/>
</dbReference>
<dbReference type="GO" id="GO:2001295">
    <property type="term" value="P:malonyl-CoA biosynthetic process"/>
    <property type="evidence" value="ECO:0007669"/>
    <property type="project" value="UniProtKB-UniRule"/>
</dbReference>
<dbReference type="Gene3D" id="3.90.226.10">
    <property type="entry name" value="2-enoyl-CoA Hydratase, Chain A, domain 1"/>
    <property type="match status" value="1"/>
</dbReference>
<dbReference type="HAMAP" id="MF_01395">
    <property type="entry name" value="AcetylCoA_CT_beta"/>
    <property type="match status" value="1"/>
</dbReference>
<dbReference type="InterPro" id="IPR034733">
    <property type="entry name" value="AcCoA_carboxyl_beta"/>
</dbReference>
<dbReference type="InterPro" id="IPR000438">
    <property type="entry name" value="Acetyl_CoA_COase_Trfase_b_su"/>
</dbReference>
<dbReference type="InterPro" id="IPR029045">
    <property type="entry name" value="ClpP/crotonase-like_dom_sf"/>
</dbReference>
<dbReference type="InterPro" id="IPR011762">
    <property type="entry name" value="COA_CT_N"/>
</dbReference>
<dbReference type="NCBIfam" id="TIGR00515">
    <property type="entry name" value="accD"/>
    <property type="match status" value="1"/>
</dbReference>
<dbReference type="PANTHER" id="PTHR42995">
    <property type="entry name" value="ACETYL-COENZYME A CARBOXYLASE CARBOXYL TRANSFERASE SUBUNIT BETA, CHLOROPLASTIC"/>
    <property type="match status" value="1"/>
</dbReference>
<dbReference type="PANTHER" id="PTHR42995:SF5">
    <property type="entry name" value="ACETYL-COENZYME A CARBOXYLASE CARBOXYL TRANSFERASE SUBUNIT BETA, CHLOROPLASTIC"/>
    <property type="match status" value="1"/>
</dbReference>
<dbReference type="Pfam" id="PF01039">
    <property type="entry name" value="Carboxyl_trans"/>
    <property type="match status" value="1"/>
</dbReference>
<dbReference type="PRINTS" id="PR01070">
    <property type="entry name" value="ACCCTRFRASEB"/>
</dbReference>
<dbReference type="SUPFAM" id="SSF52096">
    <property type="entry name" value="ClpP/crotonase"/>
    <property type="match status" value="1"/>
</dbReference>
<dbReference type="PROSITE" id="PS50980">
    <property type="entry name" value="COA_CT_NTER"/>
    <property type="match status" value="1"/>
</dbReference>
<accession>Q09G37</accession>
<name>ACCD_PLAOC</name>
<reference key="1">
    <citation type="journal article" date="2006" name="BMC Plant Biol.">
        <title>Rapid and accurate pyrosequencing of angiosperm plastid genomes.</title>
        <authorList>
            <person name="Moore M.J."/>
            <person name="Dhingra A."/>
            <person name="Soltis P.S."/>
            <person name="Shaw R."/>
            <person name="Farmerie W.G."/>
            <person name="Folta K.M."/>
            <person name="Soltis D.E."/>
        </authorList>
    </citation>
    <scope>NUCLEOTIDE SEQUENCE [LARGE SCALE GENOMIC DNA]</scope>
</reference>
<comment type="function">
    <text evidence="2">Component of the acetyl coenzyme A carboxylase (ACC) complex. Biotin carboxylase (BC) catalyzes the carboxylation of biotin on its carrier protein (BCCP) and then the CO(2) group is transferred by the transcarboxylase to acetyl-CoA to form malonyl-CoA.</text>
</comment>
<comment type="catalytic activity">
    <reaction evidence="2">
        <text>N(6)-carboxybiotinyl-L-lysyl-[protein] + acetyl-CoA = N(6)-biotinyl-L-lysyl-[protein] + malonyl-CoA</text>
        <dbReference type="Rhea" id="RHEA:54728"/>
        <dbReference type="Rhea" id="RHEA-COMP:10505"/>
        <dbReference type="Rhea" id="RHEA-COMP:10506"/>
        <dbReference type="ChEBI" id="CHEBI:57288"/>
        <dbReference type="ChEBI" id="CHEBI:57384"/>
        <dbReference type="ChEBI" id="CHEBI:83144"/>
        <dbReference type="ChEBI" id="CHEBI:83145"/>
        <dbReference type="EC" id="2.1.3.15"/>
    </reaction>
</comment>
<comment type="cofactor">
    <cofactor evidence="2">
        <name>Zn(2+)</name>
        <dbReference type="ChEBI" id="CHEBI:29105"/>
    </cofactor>
    <text evidence="2">Binds 1 zinc ion per subunit.</text>
</comment>
<comment type="pathway">
    <text evidence="2">Lipid metabolism; malonyl-CoA biosynthesis; malonyl-CoA from acetyl-CoA: step 1/1.</text>
</comment>
<comment type="subunit">
    <text evidence="1">Acetyl-CoA carboxylase is a heterohexamer composed of biotin carboxyl carrier protein, biotin carboxylase and 2 subunits each of ACCase subunit alpha and ACCase plastid-coded subunit beta (accD).</text>
</comment>
<comment type="subcellular location">
    <subcellularLocation>
        <location evidence="2">Plastid</location>
        <location evidence="2">Chloroplast stroma</location>
    </subcellularLocation>
</comment>
<comment type="similarity">
    <text evidence="2">Belongs to the AccD/PCCB family.</text>
</comment>
<feature type="chain" id="PRO_0000359162" description="Acetyl-coenzyme A carboxylase carboxyl transferase subunit beta, chloroplastic">
    <location>
        <begin position="1"/>
        <end position="497"/>
    </location>
</feature>
<feature type="domain" description="CoA carboxyltransferase N-terminal" evidence="3">
    <location>
        <begin position="230"/>
        <end position="497"/>
    </location>
</feature>
<feature type="zinc finger region" description="C4-type" evidence="2">
    <location>
        <begin position="234"/>
        <end position="256"/>
    </location>
</feature>
<feature type="binding site" evidence="2">
    <location>
        <position position="234"/>
    </location>
    <ligand>
        <name>Zn(2+)</name>
        <dbReference type="ChEBI" id="CHEBI:29105"/>
    </ligand>
</feature>
<feature type="binding site" evidence="2">
    <location>
        <position position="237"/>
    </location>
    <ligand>
        <name>Zn(2+)</name>
        <dbReference type="ChEBI" id="CHEBI:29105"/>
    </ligand>
</feature>
<feature type="binding site" evidence="2">
    <location>
        <position position="253"/>
    </location>
    <ligand>
        <name>Zn(2+)</name>
        <dbReference type="ChEBI" id="CHEBI:29105"/>
    </ligand>
</feature>
<feature type="binding site" evidence="2">
    <location>
        <position position="256"/>
    </location>
    <ligand>
        <name>Zn(2+)</name>
        <dbReference type="ChEBI" id="CHEBI:29105"/>
    </ligand>
</feature>
<sequence>MEKWWFNSMLSNEELEHRCGLSKSMDSLGAIGNSSGSEDPVINDTDKNIHSWSDIDSSSYSNVDHLFGVRNIRNFISDDTFLVRDRTGDSYSIYLDIENEIFEIDNDRSFLSELESYFSSYLNNRSKSDTHYYDRYMYDTKYTWNNHINSCIDSYIRSEISIDSYISSGSDNYDNYSDSYISSYICSESVINSSDSGSYSIRTSTSTNGSDFNIRGRYNDLDINKKYRHLWIQCENCYGLNYKKFFRSKMNICEQCGYHLKMSSSDRIELSIDPGTWDPMDEDMVSIDPIEFHSEEEPYKDRIDSYQRKTGLTEAVQTGIGQLNGIPIAIGVMDFQFMGGSMGSVVGEKITRLIEYATNGSLPLIIVCASGGARMQEGSLSLMQMAKISSASYDYQSNKKLFYVSILTSPTTGGVTASFGMLGDIIIAEPNAYIAFAGKRVIEQTLNKTVPEGSQAAEYSFHKGLFDSIVPRNLLKGVLSELFQLHGFFPLNQNSIK</sequence>
<evidence type="ECO:0000250" key="1"/>
<evidence type="ECO:0000255" key="2">
    <source>
        <dbReference type="HAMAP-Rule" id="MF_01395"/>
    </source>
</evidence>
<evidence type="ECO:0000255" key="3">
    <source>
        <dbReference type="PROSITE-ProRule" id="PRU01136"/>
    </source>
</evidence>
<proteinExistence type="inferred from homology"/>
<keyword id="KW-0067">ATP-binding</keyword>
<keyword id="KW-0150">Chloroplast</keyword>
<keyword id="KW-0275">Fatty acid biosynthesis</keyword>
<keyword id="KW-0276">Fatty acid metabolism</keyword>
<keyword id="KW-0444">Lipid biosynthesis</keyword>
<keyword id="KW-0443">Lipid metabolism</keyword>
<keyword id="KW-0479">Metal-binding</keyword>
<keyword id="KW-0547">Nucleotide-binding</keyword>
<keyword id="KW-0934">Plastid</keyword>
<keyword id="KW-0808">Transferase</keyword>
<keyword id="KW-0862">Zinc</keyword>
<keyword id="KW-0863">Zinc-finger</keyword>
<organism>
    <name type="scientific">Platanus occidentalis</name>
    <name type="common">Sycamore</name>
    <name type="synonym">American plane tree</name>
    <dbReference type="NCBI Taxonomy" id="4403"/>
    <lineage>
        <taxon>Eukaryota</taxon>
        <taxon>Viridiplantae</taxon>
        <taxon>Streptophyta</taxon>
        <taxon>Embryophyta</taxon>
        <taxon>Tracheophyta</taxon>
        <taxon>Spermatophyta</taxon>
        <taxon>Magnoliopsida</taxon>
        <taxon>Proteales</taxon>
        <taxon>Platanaceae</taxon>
        <taxon>Platanus</taxon>
    </lineage>
</organism>
<protein>
    <recommendedName>
        <fullName evidence="2">Acetyl-coenzyme A carboxylase carboxyl transferase subunit beta, chloroplastic</fullName>
        <shortName evidence="2">ACCase subunit beta</shortName>
        <shortName evidence="2">Acetyl-CoA carboxylase carboxyltransferase subunit beta</shortName>
        <ecNumber evidence="2">2.1.3.15</ecNumber>
    </recommendedName>
</protein>